<organism>
    <name type="scientific">Arabidopsis thaliana</name>
    <name type="common">Mouse-ear cress</name>
    <dbReference type="NCBI Taxonomy" id="3702"/>
    <lineage>
        <taxon>Eukaryota</taxon>
        <taxon>Viridiplantae</taxon>
        <taxon>Streptophyta</taxon>
        <taxon>Embryophyta</taxon>
        <taxon>Tracheophyta</taxon>
        <taxon>Spermatophyta</taxon>
        <taxon>Magnoliopsida</taxon>
        <taxon>eudicotyledons</taxon>
        <taxon>Gunneridae</taxon>
        <taxon>Pentapetalae</taxon>
        <taxon>rosids</taxon>
        <taxon>malvids</taxon>
        <taxon>Brassicales</taxon>
        <taxon>Brassicaceae</taxon>
        <taxon>Camelineae</taxon>
        <taxon>Arabidopsis</taxon>
    </lineage>
</organism>
<gene>
    <name type="primary">MAP65-3</name>
    <name type="synonym">PLE</name>
    <name type="ordered locus">At5g51600</name>
    <name type="ORF">K17N15.15</name>
</gene>
<comment type="function">
    <text evidence="5 6 7 8">Microtubule-associated protein that plays a critical role in organizing the mitotic microtubule array during both early and late mitosis in all plant organs. Essential for the cytokinesis, especially in roots, by maintaining the integrity of the overlapped microtubules in the phragmoplast. Required during root morphogenesis. Needed for giant cell development during root knot nematode infection, where cytokinesis is initiated but not completed.</text>
</comment>
<comment type="subunit">
    <text evidence="1">Forms a dimer (By similarity). Binds to microtubules (MT) during cell division. Bundles polymerized MT via the formation of 25-nm crossbridges with centrally located endocytic MT, and midline phragmoplast MT.</text>
</comment>
<comment type="subcellular location">
    <subcellularLocation>
        <location>Nucleus</location>
    </subcellularLocation>
    <subcellularLocation>
        <location>Cytoplasm</location>
    </subcellularLocation>
    <subcellularLocation>
        <location>Cytoplasm</location>
        <location>Cytoskeleton</location>
        <location>Phragmoplast</location>
    </subcellularLocation>
    <text>Locates only to the mitotic MT arrays. Present in MT cortical arrays just before mitosis. Associates to MT in preprophase band, during anaphase, and in phragmoplast, including midzone. Distributed diffusely through the cytoplasm during metaphase only. At the end of cytokinesis, present only at the cell periphery, forming a ring around the newly formed cell plate. During root knot nematode infection, targeted to the giant cell mini cell plate.</text>
</comment>
<comment type="tissue specificity">
    <text evidence="8">Expressed in all tissues enriched in dividing cells, such as the root and shoot apical meristem, foliar primordia, and young leaves, and embryos.</text>
</comment>
<comment type="developmental stage">
    <text evidence="8">Present in dividing tissues during all stages of embryonic development.</text>
</comment>
<comment type="disruption phenotype">
    <text evidence="5 6 7">Irregular root expansion. Defects in karyokinesis and cytokinesis. Cytokinesis defects before the embryo dermatogen stage and in roots. Embryos with enlarged nuclei, often containing multiple nucleoli. Some abnormal stomata with pores attached to a single side of the mother cell. Long root hairs. In roots, multinucleated cells, cell wall stubs, and synchronized cell divisions in incompletely separated cells. Normal anaphase spindle, but distorted phragmoplast. Abnormal formation of nematode-mediated giant cells leading to impaired maturation of nematode larvae.</text>
</comment>
<comment type="similarity">
    <text evidence="9">Belongs to the MAP65/ASE1 family.</text>
</comment>
<reference key="1">
    <citation type="journal article" date="2000" name="DNA Res.">
        <title>Structural analysis of Arabidopsis thaliana chromosome 5. X. Sequence features of the regions of 3,076,755 bp covered by sixty P1 and TAC clones.</title>
        <authorList>
            <person name="Sato S."/>
            <person name="Nakamura Y."/>
            <person name="Kaneko T."/>
            <person name="Katoh T."/>
            <person name="Asamizu E."/>
            <person name="Kotani H."/>
            <person name="Tabata S."/>
        </authorList>
    </citation>
    <scope>NUCLEOTIDE SEQUENCE [LARGE SCALE GENOMIC DNA]</scope>
    <source>
        <strain>cv. Columbia</strain>
    </source>
</reference>
<reference key="2">
    <citation type="journal article" date="2017" name="Plant J.">
        <title>Araport11: a complete reannotation of the Arabidopsis thaliana reference genome.</title>
        <authorList>
            <person name="Cheng C.Y."/>
            <person name="Krishnakumar V."/>
            <person name="Chan A.P."/>
            <person name="Thibaud-Nissen F."/>
            <person name="Schobel S."/>
            <person name="Town C.D."/>
        </authorList>
    </citation>
    <scope>GENOME REANNOTATION</scope>
    <source>
        <strain>cv. Columbia</strain>
    </source>
</reference>
<reference key="3">
    <citation type="journal article" date="2002" name="Plant Mol. Biol.">
        <title>The plant cytoskeleton: recent advances in the study of the plant microtubule-associated proteins MAP-65, MAP-190 and the Xenopus MAP215-like protein, MOR1.</title>
        <authorList>
            <person name="Hussey P.J."/>
            <person name="Hawkins T.J."/>
            <person name="Igarashi H."/>
            <person name="Kaloriti D."/>
            <person name="Smertenko A."/>
        </authorList>
    </citation>
    <scope>GENE FAMILY</scope>
    <scope>NOMENCLATURE</scope>
</reference>
<reference key="4">
    <citation type="journal article" date="2002" name="Plant Physiol.">
        <title>Cytokinesis-defective mutants of Arabidopsis.</title>
        <authorList>
            <person name="Soellner R."/>
            <person name="Glaesser G."/>
            <person name="Wanner G."/>
            <person name="Somerville C.R."/>
            <person name="Juergens G."/>
            <person name="Assaad F.F."/>
        </authorList>
    </citation>
    <scope>FUNCTION</scope>
    <scope>DISRUPTION PHENOTYPE</scope>
</reference>
<reference key="5">
    <citation type="journal article" date="2002" name="Plant Physiol.">
        <title>Two new loci, PLEIADE and HYADE, implicate organ-specific regulation of cytokinesis in Arabidopsis.</title>
        <authorList>
            <person name="Mueller S."/>
            <person name="Fuchs E."/>
            <person name="Ovecka M."/>
            <person name="Wysocka-Diller J."/>
            <person name="Benfey P.N."/>
            <person name="Hauser M.-T."/>
        </authorList>
    </citation>
    <scope>FUNCTION</scope>
    <scope>MUTAGENESIS OF ALA-421</scope>
    <scope>DISRUPTION PHENOTYPE</scope>
</reference>
<reference key="6">
    <citation type="journal article" date="2004" name="Curr. Biol.">
        <title>The plant microtubule-associated protein AtMAP65-3/PLE is essential for cytokinetic phragmoplast function.</title>
        <authorList>
            <person name="Mueller S."/>
            <person name="Smertenko A."/>
            <person name="Wagner V."/>
            <person name="Heinrich M."/>
            <person name="Hussey P.J."/>
            <person name="Hauser M.-T."/>
        </authorList>
    </citation>
    <scope>FUNCTION</scope>
    <scope>SUBCELLULAR LOCATION</scope>
    <scope>DISRUPTION PHENOTYPE</scope>
    <scope>INTERACTION WITH MICROTUBULES</scope>
</reference>
<reference key="7">
    <citation type="journal article" date="2004" name="Plant J.">
        <title>Molecular dissection of plant cytokinesis and phragmoplast structure: a survey of GFP-tagged proteins.</title>
        <authorList>
            <person name="Van Damme D."/>
            <person name="Bouget F.-Y."/>
            <person name="Van Poucke K."/>
            <person name="Inze D."/>
            <person name="Geelen D."/>
        </authorList>
    </citation>
    <scope>INTERACTION WITH MICROTUBULES</scope>
    <scope>SUBCELLULAR LOCATION</scope>
</reference>
<reference key="8">
    <citation type="journal article" date="2008" name="Plant Cell">
        <title>MAP65-3 microtubule-associated protein is essential for nematode-induced giant cell ontogenesis in Arabidopsis.</title>
        <authorList>
            <person name="Caillaud M.-C."/>
            <person name="Lecomte P."/>
            <person name="Jammes F."/>
            <person name="Quentin M."/>
            <person name="Pagnotta S."/>
            <person name="Andrio E."/>
            <person name="de Almeida Engler J."/>
            <person name="Marfaing N."/>
            <person name="Gounon P."/>
            <person name="Abad P."/>
            <person name="Favery B."/>
        </authorList>
    </citation>
    <scope>FUNCTION</scope>
    <scope>SUBCELLULAR LOCATION</scope>
    <scope>TISSUE SPECIFICITY</scope>
    <scope>DEVELOPMENTAL STAGE</scope>
</reference>
<reference key="9">
    <citation type="journal article" date="2008" name="Plant Cell">
        <title>The C-terminal variable region specifies the dynamic properties of Arabidopsis microtubule-associated protein MAP65 isotypes.</title>
        <authorList>
            <person name="Smertenko A.P."/>
            <person name="Kaloriti D."/>
            <person name="Chang H.-Y."/>
            <person name="Fiserova J."/>
            <person name="Opatrny Z."/>
            <person name="Hussey P.J."/>
        </authorList>
    </citation>
    <scope>SUBCELLULAR LOCATION</scope>
</reference>
<dbReference type="EMBL" id="AB018109">
    <property type="protein sequence ID" value="BAB08676.1"/>
    <property type="molecule type" value="Genomic_DNA"/>
</dbReference>
<dbReference type="EMBL" id="CP002688">
    <property type="protein sequence ID" value="AED96102.1"/>
    <property type="molecule type" value="Genomic_DNA"/>
</dbReference>
<dbReference type="RefSeq" id="NP_199973.1">
    <property type="nucleotide sequence ID" value="NM_124539.4"/>
</dbReference>
<dbReference type="SMR" id="Q9FHM4"/>
<dbReference type="BioGRID" id="20479">
    <property type="interactions" value="1"/>
</dbReference>
<dbReference type="FunCoup" id="Q9FHM4">
    <property type="interactions" value="1872"/>
</dbReference>
<dbReference type="IntAct" id="Q9FHM4">
    <property type="interactions" value="1"/>
</dbReference>
<dbReference type="STRING" id="3702.Q9FHM4"/>
<dbReference type="GlyGen" id="Q9FHM4">
    <property type="glycosylation" value="1 site"/>
</dbReference>
<dbReference type="iPTMnet" id="Q9FHM4"/>
<dbReference type="PaxDb" id="3702-AT5G51600.1"/>
<dbReference type="ProteomicsDB" id="238581"/>
<dbReference type="EnsemblPlants" id="AT5G51600.1">
    <property type="protein sequence ID" value="AT5G51600.1"/>
    <property type="gene ID" value="AT5G51600"/>
</dbReference>
<dbReference type="GeneID" id="835234"/>
<dbReference type="Gramene" id="AT5G51600.1">
    <property type="protein sequence ID" value="AT5G51600.1"/>
    <property type="gene ID" value="AT5G51600"/>
</dbReference>
<dbReference type="KEGG" id="ath:AT5G51600"/>
<dbReference type="Araport" id="AT5G51600"/>
<dbReference type="TAIR" id="AT5G51600">
    <property type="gene designation" value="PLE"/>
</dbReference>
<dbReference type="eggNOG" id="KOG4302">
    <property type="taxonomic scope" value="Eukaryota"/>
</dbReference>
<dbReference type="HOGENOM" id="CLU_011760_0_0_1"/>
<dbReference type="InParanoid" id="Q9FHM4"/>
<dbReference type="OMA" id="ATHSRAM"/>
<dbReference type="OrthoDB" id="642895at2759"/>
<dbReference type="PhylomeDB" id="Q9FHM4"/>
<dbReference type="CD-CODE" id="33FCD62D">
    <property type="entry name" value="Centrosome"/>
</dbReference>
<dbReference type="PRO" id="PR:Q9FHM4"/>
<dbReference type="Proteomes" id="UP000006548">
    <property type="component" value="Chromosome 5"/>
</dbReference>
<dbReference type="ExpressionAtlas" id="Q9FHM4">
    <property type="expression patterns" value="baseline and differential"/>
</dbReference>
<dbReference type="GO" id="GO:0055028">
    <property type="term" value="C:cortical microtubule"/>
    <property type="evidence" value="ECO:0000314"/>
    <property type="project" value="TAIR"/>
</dbReference>
<dbReference type="GO" id="GO:0005874">
    <property type="term" value="C:microtubule"/>
    <property type="evidence" value="ECO:0007005"/>
    <property type="project" value="TAIR"/>
</dbReference>
<dbReference type="GO" id="GO:0005634">
    <property type="term" value="C:nucleus"/>
    <property type="evidence" value="ECO:0007669"/>
    <property type="project" value="UniProtKB-SubCell"/>
</dbReference>
<dbReference type="GO" id="GO:0009524">
    <property type="term" value="C:phragmoplast"/>
    <property type="evidence" value="ECO:0000314"/>
    <property type="project" value="TAIR"/>
</dbReference>
<dbReference type="GO" id="GO:0009574">
    <property type="term" value="C:preprophase band"/>
    <property type="evidence" value="ECO:0000314"/>
    <property type="project" value="TAIR"/>
</dbReference>
<dbReference type="GO" id="GO:0008017">
    <property type="term" value="F:microtubule binding"/>
    <property type="evidence" value="ECO:0000314"/>
    <property type="project" value="TAIR"/>
</dbReference>
<dbReference type="GO" id="GO:0000911">
    <property type="term" value="P:cytokinesis by cell plate formation"/>
    <property type="evidence" value="ECO:0000315"/>
    <property type="project" value="TAIR"/>
</dbReference>
<dbReference type="GO" id="GO:0052096">
    <property type="term" value="P:formation of syncytium involving giant cell for nutrient acquisition"/>
    <property type="evidence" value="ECO:0000315"/>
    <property type="project" value="TAIR"/>
</dbReference>
<dbReference type="GO" id="GO:0000226">
    <property type="term" value="P:microtubule cytoskeleton organization"/>
    <property type="evidence" value="ECO:0000315"/>
    <property type="project" value="TAIR"/>
</dbReference>
<dbReference type="GO" id="GO:0046785">
    <property type="term" value="P:microtubule polymerization"/>
    <property type="evidence" value="ECO:0000314"/>
    <property type="project" value="TAIR"/>
</dbReference>
<dbReference type="GO" id="GO:0000280">
    <property type="term" value="P:nuclear division"/>
    <property type="evidence" value="ECO:0000315"/>
    <property type="project" value="TAIR"/>
</dbReference>
<dbReference type="GO" id="GO:0009624">
    <property type="term" value="P:response to nematode"/>
    <property type="evidence" value="ECO:0000315"/>
    <property type="project" value="UniProtKB"/>
</dbReference>
<dbReference type="FunFam" id="1.20.58.1520:FF:000002">
    <property type="entry name" value="65-kDa microtubule-associated protein 6"/>
    <property type="match status" value="1"/>
</dbReference>
<dbReference type="Gene3D" id="1.20.58.1520">
    <property type="match status" value="1"/>
</dbReference>
<dbReference type="InterPro" id="IPR007145">
    <property type="entry name" value="MAP65_Ase1_PRC1"/>
</dbReference>
<dbReference type="PANTHER" id="PTHR19321:SF7">
    <property type="entry name" value="65-KDA MICROTUBULE-ASSOCIATED PROTEIN 3"/>
    <property type="match status" value="1"/>
</dbReference>
<dbReference type="PANTHER" id="PTHR19321">
    <property type="entry name" value="PROTEIN REGULATOR OF CYTOKINESIS 1 PRC1-RELATED"/>
    <property type="match status" value="1"/>
</dbReference>
<dbReference type="Pfam" id="PF03999">
    <property type="entry name" value="MAP65_ASE1"/>
    <property type="match status" value="1"/>
</dbReference>
<evidence type="ECO:0000250" key="1"/>
<evidence type="ECO:0000250" key="2">
    <source>
        <dbReference type="UniProtKB" id="Q9FLP0"/>
    </source>
</evidence>
<evidence type="ECO:0000255" key="3"/>
<evidence type="ECO:0000256" key="4">
    <source>
        <dbReference type="SAM" id="MobiDB-lite"/>
    </source>
</evidence>
<evidence type="ECO:0000269" key="5">
    <source>
    </source>
</evidence>
<evidence type="ECO:0000269" key="6">
    <source>
    </source>
</evidence>
<evidence type="ECO:0000269" key="7">
    <source>
    </source>
</evidence>
<evidence type="ECO:0000269" key="8">
    <source>
    </source>
</evidence>
<evidence type="ECO:0000305" key="9"/>
<keyword id="KW-0131">Cell cycle</keyword>
<keyword id="KW-0132">Cell division</keyword>
<keyword id="KW-0175">Coiled coil</keyword>
<keyword id="KW-0963">Cytoplasm</keyword>
<keyword id="KW-0206">Cytoskeleton</keyword>
<keyword id="KW-0493">Microtubule</keyword>
<keyword id="KW-0498">Mitosis</keyword>
<keyword id="KW-0539">Nucleus</keyword>
<keyword id="KW-0597">Phosphoprotein</keyword>
<keyword id="KW-1185">Reference proteome</keyword>
<protein>
    <recommendedName>
        <fullName>65-kDa microtubule-associated protein 3</fullName>
        <shortName>AtMAP65-3</shortName>
    </recommendedName>
    <alternativeName>
        <fullName>Protein PLEIADE</fullName>
    </alternativeName>
</protein>
<name>MA653_ARATH</name>
<accession>Q9FHM4</accession>
<sequence>MASVQKDPILQVETTCGSLLFELQIIWDEVGETETDRDQMLLELERECLEVYRRKVDQANRCRAQLRQAIADAEAQLAAICSAMGERPVHIRQSDQSVGSLKQELGRILPELEEMQKRKVERRNQFIVVMEQIDSITNDIKGQGELVHSEPLIDETNLSMRKLEELHCQLQVLQKEKIDRVETIRKHLCTLYSHCSVLGMDFNEVVGQVNPTLSDPEGPRSLSDHTIEKLGAAVQKLMEVKIQRMQRLQDLATTMLELWNLMDTPIEEQQEYQHITCNIAASEHEITEANSLSEDFIKYVEAEVVRLDEVKASKMKELVLKKRSELEEICRKTHLLPVSDSAIDQTIVAIESGIVDATMVLEHLEQHISKIKEEALSRKEILERVEKWLSACDEESWLEEYNRDDNRYNAGRGAHLTLKRAEKARNLVTKLPGMVEALASKTIVWEQENGIEFLYDGIRLLSMLEEYNILRQEREEEHRRQRDQKKLQGQLIAEQEALYGSKPSPSKPLGGKKAPRMSTGGASNRRLSLGAAMHQTPKPNKKADHRHNDGALSNGRRGLDIAGLPSRKQSMNPSEMLQSPLVRKPFSPISTTVVASKANIATTTTQQLPKNNAVNEISSFATPIKNNNILRNLEEEKMMTMMMQTPKNVAAMIPIPSTPATVSVPMHTAPTPFTNNARLMSEKPEVVEYSFEERRLAFMLQSECRLV</sequence>
<proteinExistence type="evidence at protein level"/>
<feature type="chain" id="PRO_0000395474" description="65-kDa microtubule-associated protein 3">
    <location>
        <begin position="1"/>
        <end position="707"/>
    </location>
</feature>
<feature type="region of interest" description="Disordered" evidence="4">
    <location>
        <begin position="495"/>
        <end position="574"/>
    </location>
</feature>
<feature type="coiled-coil region" evidence="3">
    <location>
        <begin position="49"/>
        <end position="84"/>
    </location>
</feature>
<feature type="coiled-coil region" evidence="3">
    <location>
        <begin position="157"/>
        <end position="179"/>
    </location>
</feature>
<feature type="coiled-coil region" evidence="3">
    <location>
        <begin position="269"/>
        <end position="289"/>
    </location>
</feature>
<feature type="coiled-coil region" evidence="3">
    <location>
        <begin position="354"/>
        <end position="374"/>
    </location>
</feature>
<feature type="coiled-coil region" evidence="3">
    <location>
        <begin position="464"/>
        <end position="486"/>
    </location>
</feature>
<feature type="compositionally biased region" description="Low complexity" evidence="4">
    <location>
        <begin position="500"/>
        <end position="512"/>
    </location>
</feature>
<feature type="site" description="Microtubule binding" evidence="1">
    <location>
        <position position="410"/>
    </location>
</feature>
<feature type="site" description="Microtubule binding">
    <location>
        <position position="421"/>
    </location>
</feature>
<feature type="modified residue" description="Phosphoserine" evidence="2">
    <location>
        <position position="504"/>
    </location>
</feature>
<feature type="modified residue" description="Phosphoserine" evidence="2">
    <location>
        <position position="528"/>
    </location>
</feature>
<feature type="mutagenesis site" description="In ple-4; impaired microtubule binding." evidence="6">
    <original>A</original>
    <variation>V</variation>
    <location>
        <position position="421"/>
    </location>
</feature>